<name>UNC98_CAEBR</name>
<organism>
    <name type="scientific">Caenorhabditis briggsae</name>
    <dbReference type="NCBI Taxonomy" id="6238"/>
    <lineage>
        <taxon>Eukaryota</taxon>
        <taxon>Metazoa</taxon>
        <taxon>Ecdysozoa</taxon>
        <taxon>Nematoda</taxon>
        <taxon>Chromadorea</taxon>
        <taxon>Rhabditida</taxon>
        <taxon>Rhabditina</taxon>
        <taxon>Rhabditomorpha</taxon>
        <taxon>Rhabditoidea</taxon>
        <taxon>Rhabditidae</taxon>
        <taxon>Peloderinae</taxon>
        <taxon>Caenorhabditis</taxon>
    </lineage>
</organism>
<reference key="1">
    <citation type="journal article" date="2003" name="PLoS Biol.">
        <title>The genome sequence of Caenorhabditis briggsae: a platform for comparative genomics.</title>
        <authorList>
            <person name="Stein L.D."/>
            <person name="Bao Z."/>
            <person name="Blasiar D."/>
            <person name="Blumenthal T."/>
            <person name="Brent M.R."/>
            <person name="Chen N."/>
            <person name="Chinwalla A."/>
            <person name="Clarke L."/>
            <person name="Clee C."/>
            <person name="Coghlan A."/>
            <person name="Coulson A."/>
            <person name="D'Eustachio P."/>
            <person name="Fitch D.H.A."/>
            <person name="Fulton L.A."/>
            <person name="Fulton R.E."/>
            <person name="Griffiths-Jones S."/>
            <person name="Harris T.W."/>
            <person name="Hillier L.W."/>
            <person name="Kamath R."/>
            <person name="Kuwabara P.E."/>
            <person name="Mardis E.R."/>
            <person name="Marra M.A."/>
            <person name="Miner T.L."/>
            <person name="Minx P."/>
            <person name="Mullikin J.C."/>
            <person name="Plumb R.W."/>
            <person name="Rogers J."/>
            <person name="Schein J.E."/>
            <person name="Sohrmann M."/>
            <person name="Spieth J."/>
            <person name="Stajich J.E."/>
            <person name="Wei C."/>
            <person name="Willey D."/>
            <person name="Wilson R.K."/>
            <person name="Durbin R.M."/>
            <person name="Waterston R.H."/>
        </authorList>
    </citation>
    <scope>NUCLEOTIDE SEQUENCE [LARGE SCALE GENOMIC DNA]</scope>
    <source>
        <strain>AF16</strain>
    </source>
</reference>
<dbReference type="EMBL" id="HE600942">
    <property type="protein sequence ID" value="CAP34628.1"/>
    <property type="molecule type" value="Genomic_DNA"/>
</dbReference>
<dbReference type="SMR" id="Q612G6"/>
<dbReference type="FunCoup" id="Q612G6">
    <property type="interactions" value="26"/>
</dbReference>
<dbReference type="STRING" id="6238.Q612G6"/>
<dbReference type="EnsemblMetazoa" id="CBG16732.1">
    <property type="protein sequence ID" value="CBG16732.1"/>
    <property type="gene ID" value="WBGene00036597"/>
</dbReference>
<dbReference type="KEGG" id="cbr:CBG_16732"/>
<dbReference type="CTD" id="8587068"/>
<dbReference type="WormBase" id="CBG16732">
    <property type="protein sequence ID" value="CBP18808"/>
    <property type="gene ID" value="WBGene00036597"/>
    <property type="gene designation" value="Cbr-unc-98"/>
</dbReference>
<dbReference type="eggNOG" id="KOG1721">
    <property type="taxonomic scope" value="Eukaryota"/>
</dbReference>
<dbReference type="HOGENOM" id="CLU_078605_0_0_1"/>
<dbReference type="InParanoid" id="Q612G6"/>
<dbReference type="OMA" id="RASRYMM"/>
<dbReference type="Proteomes" id="UP000008549">
    <property type="component" value="Unassembled WGS sequence"/>
</dbReference>
<dbReference type="GO" id="GO:0031430">
    <property type="term" value="C:M band"/>
    <property type="evidence" value="ECO:0000250"/>
    <property type="project" value="UniProtKB"/>
</dbReference>
<dbReference type="GO" id="GO:0032982">
    <property type="term" value="C:myosin filament"/>
    <property type="evidence" value="ECO:0007669"/>
    <property type="project" value="UniProtKB-KW"/>
</dbReference>
<dbReference type="GO" id="GO:0005634">
    <property type="term" value="C:nucleus"/>
    <property type="evidence" value="ECO:0000250"/>
    <property type="project" value="UniProtKB"/>
</dbReference>
<dbReference type="GO" id="GO:0008092">
    <property type="term" value="F:cytoskeletal protein binding"/>
    <property type="evidence" value="ECO:0007669"/>
    <property type="project" value="EnsemblMetazoa"/>
</dbReference>
<dbReference type="GO" id="GO:0000981">
    <property type="term" value="F:DNA-binding transcription factor activity, RNA polymerase II-specific"/>
    <property type="evidence" value="ECO:0000318"/>
    <property type="project" value="GO_Central"/>
</dbReference>
<dbReference type="GO" id="GO:0000977">
    <property type="term" value="F:RNA polymerase II transcription regulatory region sequence-specific DNA binding"/>
    <property type="evidence" value="ECO:0000318"/>
    <property type="project" value="GO_Central"/>
</dbReference>
<dbReference type="GO" id="GO:0008270">
    <property type="term" value="F:zinc ion binding"/>
    <property type="evidence" value="ECO:0007669"/>
    <property type="project" value="UniProtKB-KW"/>
</dbReference>
<dbReference type="GO" id="GO:0040011">
    <property type="term" value="P:locomotion"/>
    <property type="evidence" value="ECO:0000250"/>
    <property type="project" value="UniProtKB"/>
</dbReference>
<dbReference type="GO" id="GO:0007626">
    <property type="term" value="P:locomotory behavior"/>
    <property type="evidence" value="ECO:0000250"/>
    <property type="project" value="UniProtKB"/>
</dbReference>
<dbReference type="GO" id="GO:0007517">
    <property type="term" value="P:muscle organ development"/>
    <property type="evidence" value="ECO:0007669"/>
    <property type="project" value="UniProtKB-KW"/>
</dbReference>
<dbReference type="GO" id="GO:0030239">
    <property type="term" value="P:myofibril assembly"/>
    <property type="evidence" value="ECO:0000250"/>
    <property type="project" value="UniProtKB"/>
</dbReference>
<dbReference type="GO" id="GO:0040032">
    <property type="term" value="P:post-embryonic body morphogenesis"/>
    <property type="evidence" value="ECO:0000250"/>
    <property type="project" value="UniProtKB"/>
</dbReference>
<dbReference type="GO" id="GO:0006357">
    <property type="term" value="P:regulation of transcription by RNA polymerase II"/>
    <property type="evidence" value="ECO:0000318"/>
    <property type="project" value="GO_Central"/>
</dbReference>
<dbReference type="FunFam" id="3.30.160.60:FF:002530">
    <property type="entry name" value="Zinc finger protein"/>
    <property type="match status" value="1"/>
</dbReference>
<dbReference type="Gene3D" id="3.30.160.60">
    <property type="entry name" value="Classic Zinc Finger"/>
    <property type="match status" value="3"/>
</dbReference>
<dbReference type="InterPro" id="IPR050636">
    <property type="entry name" value="C2H2-ZF_domain-containing"/>
</dbReference>
<dbReference type="InterPro" id="IPR036236">
    <property type="entry name" value="Znf_C2H2_sf"/>
</dbReference>
<dbReference type="InterPro" id="IPR013087">
    <property type="entry name" value="Znf_C2H2_type"/>
</dbReference>
<dbReference type="PANTHER" id="PTHR47772">
    <property type="entry name" value="ZINC FINGER PROTEIN 200"/>
    <property type="match status" value="1"/>
</dbReference>
<dbReference type="PANTHER" id="PTHR47772:SF1">
    <property type="entry name" value="ZINC FINGER PROTEIN 200"/>
    <property type="match status" value="1"/>
</dbReference>
<dbReference type="Pfam" id="PF00096">
    <property type="entry name" value="zf-C2H2"/>
    <property type="match status" value="1"/>
</dbReference>
<dbReference type="Pfam" id="PF13894">
    <property type="entry name" value="zf-C2H2_4"/>
    <property type="match status" value="1"/>
</dbReference>
<dbReference type="SMART" id="SM00355">
    <property type="entry name" value="ZnF_C2H2"/>
    <property type="match status" value="3"/>
</dbReference>
<dbReference type="SUPFAM" id="SSF57667">
    <property type="entry name" value="beta-beta-alpha zinc fingers"/>
    <property type="match status" value="2"/>
</dbReference>
<dbReference type="PROSITE" id="PS00028">
    <property type="entry name" value="ZINC_FINGER_C2H2_1"/>
    <property type="match status" value="3"/>
</dbReference>
<dbReference type="PROSITE" id="PS50157">
    <property type="entry name" value="ZINC_FINGER_C2H2_2"/>
    <property type="match status" value="3"/>
</dbReference>
<evidence type="ECO:0000250" key="1">
    <source>
        <dbReference type="UniProtKB" id="Q19203"/>
    </source>
</evidence>
<evidence type="ECO:0000255" key="2">
    <source>
        <dbReference type="PROSITE-ProRule" id="PRU00042"/>
    </source>
</evidence>
<accession>Q612G6</accession>
<accession>A8XPQ2</accession>
<proteinExistence type="inferred from homology"/>
<feature type="chain" id="PRO_0000306200" description="Zinc finger protein unc-98">
    <location>
        <begin position="1"/>
        <end position="308"/>
    </location>
</feature>
<feature type="zinc finger region" description="C2H2-type 1" evidence="2">
    <location>
        <begin position="111"/>
        <end position="133"/>
    </location>
</feature>
<feature type="zinc finger region" description="C2H2-type 2" evidence="2">
    <location>
        <begin position="139"/>
        <end position="161"/>
    </location>
</feature>
<feature type="zinc finger region" description="C2H2-type 3; degenerate" evidence="1 2">
    <location>
        <begin position="166"/>
        <end position="186"/>
    </location>
</feature>
<feature type="zinc finger region" description="C2H2-type 4" evidence="2">
    <location>
        <begin position="244"/>
        <end position="266"/>
    </location>
</feature>
<gene>
    <name evidence="1" type="primary">unc-98</name>
    <name type="ORF">CBG16732</name>
</gene>
<sequence>MGDDLFKEARKERDDFEELMNACDLAKMSVKNNEMVHGLETFGVNHGESSSENKPTEIMKVVAPTVEAYVGSSSSTTVTKPSGGAVDGIDQKEVRQDGTSVQKDDNGFIFYKCRFCGLTFNFMNTLRAHERIHDVSQPYVCGKCGESYEFACQLEYHAAQHSEIDGFKCDCGRTFFSYTEMLYHKHTDDPIELIGAPETTTVLVNKKKIIPVTEQDLPQPAFVTEGYEPKHPLRVYSDVRSKPYICEYCSKSYSDSRGLAYHMYSHRGEKQFNPRASRYMMGREGVGYTDSRSYYLFPRTSGYVSPRF</sequence>
<protein>
    <recommendedName>
        <fullName>Zinc finger protein unc-98</fullName>
    </recommendedName>
    <alternativeName>
        <fullName>Uncoordinated protein 98</fullName>
    </alternativeName>
</protein>
<keyword id="KW-0963">Cytoplasm</keyword>
<keyword id="KW-0217">Developmental protein</keyword>
<keyword id="KW-0221">Differentiation</keyword>
<keyword id="KW-0238">DNA-binding</keyword>
<keyword id="KW-0479">Metal-binding</keyword>
<keyword id="KW-0514">Muscle protein</keyword>
<keyword id="KW-0517">Myogenesis</keyword>
<keyword id="KW-0539">Nucleus</keyword>
<keyword id="KW-1185">Reference proteome</keyword>
<keyword id="KW-0677">Repeat</keyword>
<keyword id="KW-0787">Thick filament</keyword>
<keyword id="KW-0804">Transcription</keyword>
<keyword id="KW-0805">Transcription regulation</keyword>
<keyword id="KW-0862">Zinc</keyword>
<keyword id="KW-0863">Zinc-finger</keyword>
<comment type="function">
    <text evidence="1">Probable transcription factor. Required for muscle structure. Its dual subcellular localization suggests that it may function both as a muscle adhesion complex protein and as a transcription factor, or work together with transcription factors, to influence gene expression. Thought to act as a molecular bridge between unc-97 and mhc-a at the M-line of muscles, possibly in a signaling role (By similarity).</text>
</comment>
<comment type="subcellular location">
    <subcellularLocation>
        <location evidence="1">Nucleus</location>
    </subcellularLocation>
    <subcellularLocation>
        <location evidence="1">Cytoplasm</location>
    </subcellularLocation>
    <text evidence="1">Localized in body wall muscle M-lines, dense bodies and muscle nuclei.</text>
</comment>
<comment type="domain">
    <text evidence="1">The N-terminal part (1-106) mediates the nuclear localization, while the fourth zinc finger is required for the localization to M-lines and dense bodies.</text>
</comment>